<gene>
    <name evidence="1" type="primary">thiI</name>
    <name type="ordered locus">CGSHiEE_04780</name>
</gene>
<dbReference type="EC" id="2.8.1.4" evidence="1"/>
<dbReference type="EMBL" id="CP000671">
    <property type="protein sequence ID" value="ABQ98349.1"/>
    <property type="molecule type" value="Genomic_DNA"/>
</dbReference>
<dbReference type="SMR" id="A5UC48"/>
<dbReference type="KEGG" id="hip:CGSHiEE_04780"/>
<dbReference type="HOGENOM" id="CLU_037952_4_1_6"/>
<dbReference type="UniPathway" id="UPA00060"/>
<dbReference type="GO" id="GO:0005829">
    <property type="term" value="C:cytosol"/>
    <property type="evidence" value="ECO:0007669"/>
    <property type="project" value="TreeGrafter"/>
</dbReference>
<dbReference type="GO" id="GO:0005524">
    <property type="term" value="F:ATP binding"/>
    <property type="evidence" value="ECO:0007669"/>
    <property type="project" value="UniProtKB-UniRule"/>
</dbReference>
<dbReference type="GO" id="GO:0004810">
    <property type="term" value="F:CCA tRNA nucleotidyltransferase activity"/>
    <property type="evidence" value="ECO:0007669"/>
    <property type="project" value="InterPro"/>
</dbReference>
<dbReference type="GO" id="GO:0000049">
    <property type="term" value="F:tRNA binding"/>
    <property type="evidence" value="ECO:0007669"/>
    <property type="project" value="UniProtKB-UniRule"/>
</dbReference>
<dbReference type="GO" id="GO:0140741">
    <property type="term" value="F:tRNA-uracil-4 sulfurtransferase activity"/>
    <property type="evidence" value="ECO:0007669"/>
    <property type="project" value="UniProtKB-EC"/>
</dbReference>
<dbReference type="GO" id="GO:0009228">
    <property type="term" value="P:thiamine biosynthetic process"/>
    <property type="evidence" value="ECO:0007669"/>
    <property type="project" value="UniProtKB-KW"/>
</dbReference>
<dbReference type="GO" id="GO:0009229">
    <property type="term" value="P:thiamine diphosphate biosynthetic process"/>
    <property type="evidence" value="ECO:0007669"/>
    <property type="project" value="UniProtKB-UniRule"/>
</dbReference>
<dbReference type="GO" id="GO:0052837">
    <property type="term" value="P:thiazole biosynthetic process"/>
    <property type="evidence" value="ECO:0007669"/>
    <property type="project" value="InterPro"/>
</dbReference>
<dbReference type="GO" id="GO:0002937">
    <property type="term" value="P:tRNA 4-thiouridine biosynthesis"/>
    <property type="evidence" value="ECO:0007669"/>
    <property type="project" value="TreeGrafter"/>
</dbReference>
<dbReference type="CDD" id="cd01712">
    <property type="entry name" value="PPase_ThiI"/>
    <property type="match status" value="1"/>
</dbReference>
<dbReference type="CDD" id="cd00158">
    <property type="entry name" value="RHOD"/>
    <property type="match status" value="1"/>
</dbReference>
<dbReference type="CDD" id="cd11716">
    <property type="entry name" value="THUMP_ThiI"/>
    <property type="match status" value="1"/>
</dbReference>
<dbReference type="FunFam" id="3.30.2130.30:FF:000002">
    <property type="entry name" value="tRNA sulfurtransferase"/>
    <property type="match status" value="1"/>
</dbReference>
<dbReference type="FunFam" id="3.40.50.620:FF:000029">
    <property type="entry name" value="tRNA sulfurtransferase"/>
    <property type="match status" value="1"/>
</dbReference>
<dbReference type="Gene3D" id="3.30.2130.30">
    <property type="match status" value="1"/>
</dbReference>
<dbReference type="Gene3D" id="3.40.50.620">
    <property type="entry name" value="HUPs"/>
    <property type="match status" value="1"/>
</dbReference>
<dbReference type="Gene3D" id="3.40.250.10">
    <property type="entry name" value="Rhodanese-like domain"/>
    <property type="match status" value="1"/>
</dbReference>
<dbReference type="HAMAP" id="MF_00021">
    <property type="entry name" value="ThiI"/>
    <property type="match status" value="1"/>
</dbReference>
<dbReference type="InterPro" id="IPR001763">
    <property type="entry name" value="Rhodanese-like_dom"/>
</dbReference>
<dbReference type="InterPro" id="IPR036873">
    <property type="entry name" value="Rhodanese-like_dom_sf"/>
</dbReference>
<dbReference type="InterPro" id="IPR014729">
    <property type="entry name" value="Rossmann-like_a/b/a_fold"/>
</dbReference>
<dbReference type="InterPro" id="IPR020536">
    <property type="entry name" value="ThiI_AANH"/>
</dbReference>
<dbReference type="InterPro" id="IPR054173">
    <property type="entry name" value="ThiI_fer"/>
</dbReference>
<dbReference type="InterPro" id="IPR049961">
    <property type="entry name" value="ThiI_N"/>
</dbReference>
<dbReference type="InterPro" id="IPR026340">
    <property type="entry name" value="THII_Thiazole_biosynth_dom"/>
</dbReference>
<dbReference type="InterPro" id="IPR004114">
    <property type="entry name" value="THUMP_dom"/>
</dbReference>
<dbReference type="InterPro" id="IPR049962">
    <property type="entry name" value="THUMP_ThiI"/>
</dbReference>
<dbReference type="InterPro" id="IPR003720">
    <property type="entry name" value="tRNA_STrfase"/>
</dbReference>
<dbReference type="InterPro" id="IPR050102">
    <property type="entry name" value="tRNA_sulfurtransferase_ThiI"/>
</dbReference>
<dbReference type="NCBIfam" id="TIGR04271">
    <property type="entry name" value="ThiI_C_thiazole"/>
    <property type="match status" value="1"/>
</dbReference>
<dbReference type="NCBIfam" id="TIGR00342">
    <property type="entry name" value="tRNA uracil 4-sulfurtransferase ThiI"/>
    <property type="match status" value="1"/>
</dbReference>
<dbReference type="PANTHER" id="PTHR43209">
    <property type="entry name" value="TRNA SULFURTRANSFERASE"/>
    <property type="match status" value="1"/>
</dbReference>
<dbReference type="PANTHER" id="PTHR43209:SF1">
    <property type="entry name" value="TRNA SULFURTRANSFERASE"/>
    <property type="match status" value="1"/>
</dbReference>
<dbReference type="Pfam" id="PF02568">
    <property type="entry name" value="ThiI"/>
    <property type="match status" value="1"/>
</dbReference>
<dbReference type="Pfam" id="PF22025">
    <property type="entry name" value="ThiI_fer"/>
    <property type="match status" value="1"/>
</dbReference>
<dbReference type="Pfam" id="PF02926">
    <property type="entry name" value="THUMP"/>
    <property type="match status" value="1"/>
</dbReference>
<dbReference type="SMART" id="SM00981">
    <property type="entry name" value="THUMP"/>
    <property type="match status" value="1"/>
</dbReference>
<dbReference type="SUPFAM" id="SSF52402">
    <property type="entry name" value="Adenine nucleotide alpha hydrolases-like"/>
    <property type="match status" value="1"/>
</dbReference>
<dbReference type="SUPFAM" id="SSF52821">
    <property type="entry name" value="Rhodanese/Cell cycle control phosphatase"/>
    <property type="match status" value="1"/>
</dbReference>
<dbReference type="SUPFAM" id="SSF143437">
    <property type="entry name" value="THUMP domain-like"/>
    <property type="match status" value="1"/>
</dbReference>
<dbReference type="PROSITE" id="PS50206">
    <property type="entry name" value="RHODANESE_3"/>
    <property type="match status" value="1"/>
</dbReference>
<dbReference type="PROSITE" id="PS51165">
    <property type="entry name" value="THUMP"/>
    <property type="match status" value="1"/>
</dbReference>
<keyword id="KW-0067">ATP-binding</keyword>
<keyword id="KW-0963">Cytoplasm</keyword>
<keyword id="KW-1015">Disulfide bond</keyword>
<keyword id="KW-0547">Nucleotide-binding</keyword>
<keyword id="KW-0676">Redox-active center</keyword>
<keyword id="KW-0694">RNA-binding</keyword>
<keyword id="KW-0784">Thiamine biosynthesis</keyword>
<keyword id="KW-0808">Transferase</keyword>
<keyword id="KW-0820">tRNA-binding</keyword>
<comment type="function">
    <text evidence="1">Catalyzes the ATP-dependent transfer of a sulfur to tRNA to produce 4-thiouridine in position 8 of tRNAs, which functions as a near-UV photosensor. Also catalyzes the transfer of sulfur to the sulfur carrier protein ThiS, forming ThiS-thiocarboxylate. This is a step in the synthesis of thiazole, in the thiamine biosynthesis pathway. The sulfur is donated as persulfide by IscS.</text>
</comment>
<comment type="catalytic activity">
    <reaction evidence="1">
        <text>[ThiI sulfur-carrier protein]-S-sulfanyl-L-cysteine + a uridine in tRNA + 2 reduced [2Fe-2S]-[ferredoxin] + ATP + H(+) = [ThiI sulfur-carrier protein]-L-cysteine + a 4-thiouridine in tRNA + 2 oxidized [2Fe-2S]-[ferredoxin] + AMP + diphosphate</text>
        <dbReference type="Rhea" id="RHEA:24176"/>
        <dbReference type="Rhea" id="RHEA-COMP:10000"/>
        <dbReference type="Rhea" id="RHEA-COMP:10001"/>
        <dbReference type="Rhea" id="RHEA-COMP:13337"/>
        <dbReference type="Rhea" id="RHEA-COMP:13338"/>
        <dbReference type="Rhea" id="RHEA-COMP:13339"/>
        <dbReference type="Rhea" id="RHEA-COMP:13340"/>
        <dbReference type="ChEBI" id="CHEBI:15378"/>
        <dbReference type="ChEBI" id="CHEBI:29950"/>
        <dbReference type="ChEBI" id="CHEBI:30616"/>
        <dbReference type="ChEBI" id="CHEBI:33019"/>
        <dbReference type="ChEBI" id="CHEBI:33737"/>
        <dbReference type="ChEBI" id="CHEBI:33738"/>
        <dbReference type="ChEBI" id="CHEBI:61963"/>
        <dbReference type="ChEBI" id="CHEBI:65315"/>
        <dbReference type="ChEBI" id="CHEBI:136798"/>
        <dbReference type="ChEBI" id="CHEBI:456215"/>
        <dbReference type="EC" id="2.8.1.4"/>
    </reaction>
</comment>
<comment type="catalytic activity">
    <reaction evidence="1">
        <text>[ThiS sulfur-carrier protein]-C-terminal Gly-Gly-AMP + S-sulfanyl-L-cysteinyl-[cysteine desulfurase] + AH2 = [ThiS sulfur-carrier protein]-C-terminal-Gly-aminoethanethioate + L-cysteinyl-[cysteine desulfurase] + A + AMP + 2 H(+)</text>
        <dbReference type="Rhea" id="RHEA:43340"/>
        <dbReference type="Rhea" id="RHEA-COMP:12157"/>
        <dbReference type="Rhea" id="RHEA-COMP:12158"/>
        <dbReference type="Rhea" id="RHEA-COMP:12910"/>
        <dbReference type="Rhea" id="RHEA-COMP:19908"/>
        <dbReference type="ChEBI" id="CHEBI:13193"/>
        <dbReference type="ChEBI" id="CHEBI:15378"/>
        <dbReference type="ChEBI" id="CHEBI:17499"/>
        <dbReference type="ChEBI" id="CHEBI:29950"/>
        <dbReference type="ChEBI" id="CHEBI:61963"/>
        <dbReference type="ChEBI" id="CHEBI:90618"/>
        <dbReference type="ChEBI" id="CHEBI:232372"/>
        <dbReference type="ChEBI" id="CHEBI:456215"/>
    </reaction>
</comment>
<comment type="pathway">
    <text evidence="1">Cofactor biosynthesis; thiamine diphosphate biosynthesis.</text>
</comment>
<comment type="subcellular location">
    <subcellularLocation>
        <location evidence="1">Cytoplasm</location>
    </subcellularLocation>
</comment>
<comment type="similarity">
    <text evidence="1">Belongs to the ThiI family.</text>
</comment>
<organism>
    <name type="scientific">Haemophilus influenzae (strain PittEE)</name>
    <dbReference type="NCBI Taxonomy" id="374930"/>
    <lineage>
        <taxon>Bacteria</taxon>
        <taxon>Pseudomonadati</taxon>
        <taxon>Pseudomonadota</taxon>
        <taxon>Gammaproteobacteria</taxon>
        <taxon>Pasteurellales</taxon>
        <taxon>Pasteurellaceae</taxon>
        <taxon>Haemophilus</taxon>
    </lineage>
</organism>
<name>THII_HAEIE</name>
<reference key="1">
    <citation type="journal article" date="2007" name="Genome Biol.">
        <title>Characterization and modeling of the Haemophilus influenzae core and supragenomes based on the complete genomic sequences of Rd and 12 clinical nontypeable strains.</title>
        <authorList>
            <person name="Hogg J.S."/>
            <person name="Hu F.Z."/>
            <person name="Janto B."/>
            <person name="Boissy R."/>
            <person name="Hayes J."/>
            <person name="Keefe R."/>
            <person name="Post J.C."/>
            <person name="Ehrlich G.D."/>
        </authorList>
    </citation>
    <scope>NUCLEOTIDE SEQUENCE [LARGE SCALE GENOMIC DNA]</scope>
    <source>
        <strain>PittEE</strain>
    </source>
</reference>
<evidence type="ECO:0000255" key="1">
    <source>
        <dbReference type="HAMAP-Rule" id="MF_00021"/>
    </source>
</evidence>
<accession>A5UC48</accession>
<sequence length="485" mass="55207">MKFIVKLFPEIMIKSETVRKRFAKILTSNIRNILQKYDEETAVVRHWDYIEVRSKNEENREELIALLQRIPGIHHFLEVEEKPFTDLHHIFELTLADVAQQLQGKTFCVRVKRKGKHKFSSIEAERYIGGGLNQHIESAKVRLKNPDVTVRIDIEDDKMMLVKARHAGIGGYPIGTQEDVLSLISGGFDSGVSSYMLIRRGSRVHYCFFNLGGVAHEIGVKQMAYHIWQRYSASHKVRFIAINFEGVVGEILEKVDNGQMGVVLKRMMVRAASKVAQRFNIEAIVTGEALGQVSSQTLTNLRLIDEAADALVLRPLITHDKEQIIAMAKEIGTDDIAKSMPEFCGVISKNPTIKAVREKIVTEEGYFNFEILESAVQNAKYLDIRQIAEETEKEVVEVEAISVLSENEVILDIRSPEETDENPFKSDTHEVIQMPFYKLSSQFGSLDQSKNYVLYCERGVMSKLQALYLKENGFSNVRVFAKKIH</sequence>
<proteinExistence type="inferred from homology"/>
<feature type="chain" id="PRO_1000074227" description="tRNA sulfurtransferase">
    <location>
        <begin position="1"/>
        <end position="485"/>
    </location>
</feature>
<feature type="domain" description="THUMP" evidence="1">
    <location>
        <begin position="61"/>
        <end position="165"/>
    </location>
</feature>
<feature type="domain" description="Rhodanese" evidence="1">
    <location>
        <begin position="404"/>
        <end position="483"/>
    </location>
</feature>
<feature type="active site" description="Cysteine persulfide intermediate" evidence="1">
    <location>
        <position position="456"/>
    </location>
</feature>
<feature type="binding site" evidence="1">
    <location>
        <begin position="183"/>
        <end position="184"/>
    </location>
    <ligand>
        <name>ATP</name>
        <dbReference type="ChEBI" id="CHEBI:30616"/>
    </ligand>
</feature>
<feature type="binding site" evidence="1">
    <location>
        <position position="265"/>
    </location>
    <ligand>
        <name>ATP</name>
        <dbReference type="ChEBI" id="CHEBI:30616"/>
    </ligand>
</feature>
<feature type="binding site" evidence="1">
    <location>
        <position position="287"/>
    </location>
    <ligand>
        <name>ATP</name>
        <dbReference type="ChEBI" id="CHEBI:30616"/>
    </ligand>
</feature>
<feature type="binding site" evidence="1">
    <location>
        <position position="296"/>
    </location>
    <ligand>
        <name>ATP</name>
        <dbReference type="ChEBI" id="CHEBI:30616"/>
    </ligand>
</feature>
<feature type="disulfide bond" description="Redox-active" evidence="1">
    <location>
        <begin position="344"/>
        <end position="456"/>
    </location>
</feature>
<protein>
    <recommendedName>
        <fullName evidence="1">tRNA sulfurtransferase</fullName>
        <ecNumber evidence="1">2.8.1.4</ecNumber>
    </recommendedName>
    <alternativeName>
        <fullName evidence="1">Sulfur carrier protein ThiS sulfurtransferase</fullName>
    </alternativeName>
    <alternativeName>
        <fullName evidence="1">Thiamine biosynthesis protein ThiI</fullName>
    </alternativeName>
    <alternativeName>
        <fullName evidence="1">tRNA 4-thiouridine synthase</fullName>
    </alternativeName>
</protein>